<sequence length="258" mass="29506">MAASDDSSHYFTEFTLSEIVDMENLYKELGDQSLHKDFCQTVASTFSCSVNRNGKSSITWKQVQIWFQEKLKHQSQPKSKTLPSPPLQIHDLSNPSSYASNASNATFVGNSTFVQTRKGKASDLADLAFEAKSARDYAWYDVSSFLTYRVLRTGELEVRVRFSGFDNRHDEWVNVKTSVRERSIPVEPSECGRVNVGDLLLCFQEREDQALYCDGHVLNIKRGIHDHARCNCVFLVRYELDNTEESLGLERICRRPEE</sequence>
<keyword id="KW-0002">3D-structure</keyword>
<keyword id="KW-0025">Alternative splicing</keyword>
<keyword id="KW-0479">Metal-binding</keyword>
<keyword id="KW-0539">Nucleus</keyword>
<keyword id="KW-1185">Reference proteome</keyword>
<keyword id="KW-0862">Zinc</keyword>
<proteinExistence type="evidence at protein level"/>
<feature type="chain" id="PRO_0000423317" description="Protein SAWADEE HOMEODOMAIN HOMOLOG 1">
    <location>
        <begin position="1"/>
        <end position="258"/>
    </location>
</feature>
<feature type="region of interest" description="SAWADEE domain">
    <location>
        <begin position="138"/>
        <end position="244"/>
    </location>
</feature>
<feature type="binding site">
    <location>
        <position position="191"/>
    </location>
    <ligand>
        <name>Zn(2+)</name>
        <dbReference type="ChEBI" id="CHEBI:29105"/>
    </ligand>
</feature>
<feature type="binding site">
    <location>
        <position position="225"/>
    </location>
    <ligand>
        <name>Zn(2+)</name>
        <dbReference type="ChEBI" id="CHEBI:29105"/>
    </ligand>
</feature>
<feature type="binding site">
    <location>
        <position position="230"/>
    </location>
    <ligand>
        <name>Zn(2+)</name>
        <dbReference type="ChEBI" id="CHEBI:29105"/>
    </ligand>
</feature>
<feature type="binding site">
    <location>
        <position position="232"/>
    </location>
    <ligand>
        <name>Zn(2+)</name>
        <dbReference type="ChEBI" id="CHEBI:29105"/>
    </ligand>
</feature>
<feature type="splice variant" id="VSP_047674" description="In isoform 3." evidence="5 6">
    <location>
        <begin position="1"/>
        <end position="21"/>
    </location>
</feature>
<feature type="splice variant" id="VSP_047675" description="In isoform 2 and isoform 3." evidence="5 6">
    <original>EESLGLERICRRPEE</original>
    <variation>ECMFRNRWD</variation>
    <location>
        <begin position="244"/>
        <end position="258"/>
    </location>
</feature>
<feature type="mutagenesis site" description="DNA methylation defects." evidence="3">
    <original>E</original>
    <variation>A</variation>
    <location>
        <position position="130"/>
    </location>
</feature>
<feature type="mutagenesis site" description="Loss of interaction with H3K9 and DNA methylation defects." evidence="3 4">
    <original>Y</original>
    <variation>A</variation>
    <location>
        <position position="140"/>
    </location>
</feature>
<feature type="mutagenesis site" description="Strong DNA methylation defects." evidence="3">
    <original>D</original>
    <variation>A</variation>
    <location>
        <position position="141"/>
    </location>
</feature>
<feature type="mutagenesis site" description="Loss of interaction with H3K9 and strong DNA methylation defects, when associated with A-165." evidence="3 4">
    <original>F</original>
    <variation>A</variation>
    <location>
        <position position="162"/>
    </location>
</feature>
<feature type="mutagenesis site" description="Loss of interaction with H3K9 and strong DNA methylation defects, when associated with A-162." evidence="3 4">
    <original>F</original>
    <variation>A</variation>
    <location>
        <position position="165"/>
    </location>
</feature>
<feature type="mutagenesis site" description="Decreased stability of the protein." evidence="3">
    <original>C</original>
    <variation>A</variation>
    <location>
        <position position="191"/>
    </location>
</feature>
<feature type="mutagenesis site" description="DNA methylation defects." evidence="3">
    <original>Y</original>
    <variation>A</variation>
    <location>
        <position position="212"/>
    </location>
</feature>
<feature type="mutagenesis site" description="Decreased stability of the protein. Decreased stability of the protein; when associated with A-232." evidence="3">
    <original>H</original>
    <variation>A</variation>
    <location>
        <position position="225"/>
    </location>
</feature>
<feature type="mutagenesis site" description="Decreased stability of the protein; when associated with A-225." evidence="3">
    <original>C</original>
    <variation>A</variation>
    <location>
        <position position="232"/>
    </location>
</feature>
<feature type="strand" evidence="10">
    <location>
        <begin position="129"/>
        <end position="132"/>
    </location>
</feature>
<feature type="turn" evidence="10">
    <location>
        <begin position="134"/>
        <end position="136"/>
    </location>
</feature>
<feature type="strand" evidence="10">
    <location>
        <begin position="139"/>
        <end position="150"/>
    </location>
</feature>
<feature type="strand" evidence="10">
    <location>
        <begin position="156"/>
        <end position="162"/>
    </location>
</feature>
<feature type="helix" evidence="11">
    <location>
        <begin position="167"/>
        <end position="169"/>
    </location>
</feature>
<feature type="strand" evidence="10">
    <location>
        <begin position="171"/>
        <end position="174"/>
    </location>
</feature>
<feature type="helix" evidence="10">
    <location>
        <begin position="175"/>
        <end position="178"/>
    </location>
</feature>
<feature type="strand" evidence="10">
    <location>
        <begin position="179"/>
        <end position="181"/>
    </location>
</feature>
<feature type="helix" evidence="10">
    <location>
        <begin position="188"/>
        <end position="193"/>
    </location>
</feature>
<feature type="strand" evidence="10">
    <location>
        <begin position="199"/>
        <end position="206"/>
    </location>
</feature>
<feature type="strand" evidence="10">
    <location>
        <begin position="209"/>
        <end position="221"/>
    </location>
</feature>
<feature type="strand" evidence="10">
    <location>
        <begin position="233"/>
        <end position="238"/>
    </location>
</feature>
<feature type="turn" evidence="10">
    <location>
        <begin position="239"/>
        <end position="241"/>
    </location>
</feature>
<feature type="strand" evidence="10">
    <location>
        <begin position="244"/>
        <end position="247"/>
    </location>
</feature>
<feature type="helix" evidence="10">
    <location>
        <begin position="249"/>
        <end position="251"/>
    </location>
</feature>
<feature type="strand" evidence="10">
    <location>
        <begin position="252"/>
        <end position="254"/>
    </location>
</feature>
<evidence type="ECO:0000269" key="1">
    <source>
    </source>
</evidence>
<evidence type="ECO:0000269" key="2">
    <source>
    </source>
</evidence>
<evidence type="ECO:0000269" key="3">
    <source>
    </source>
</evidence>
<evidence type="ECO:0000269" key="4">
    <source>
    </source>
</evidence>
<evidence type="ECO:0000303" key="5">
    <source>
    </source>
</evidence>
<evidence type="ECO:0000303" key="6">
    <source>
    </source>
</evidence>
<evidence type="ECO:0000305" key="7"/>
<evidence type="ECO:0000305" key="8">
    <source>
    </source>
</evidence>
<evidence type="ECO:0000305" key="9">
    <source>
    </source>
</evidence>
<evidence type="ECO:0007829" key="10">
    <source>
        <dbReference type="PDB" id="4IUP"/>
    </source>
</evidence>
<evidence type="ECO:0007829" key="11">
    <source>
        <dbReference type="PDB" id="4IUR"/>
    </source>
</evidence>
<accession>Q9XI47</accession>
<accession>A8MRU8</accession>
<accession>Q2V4N1</accession>
<accession>Q8GYR2</accession>
<comment type="function">
    <text evidence="1 2 3 4">Involved in RNA-directed DNA methylation (RdDM). Required for the silencing of some endogenous RdDM targets and accumulation of 24-nt siRNAs, but not for the production of Pol V-dependent transcripts. Functions in transcriptional silencing through both DNA methylation-dependent and -independent pathways. Required for both maintenance and de-novo DNA methylation. Plays a role in the recruitment of Pol IV to genomic regions associated with K9 methylated histone H3 that are targets for RdDM.</text>
</comment>
<comment type="subunit">
    <text evidence="1 3 4">Associates with the RNA polymerase IV (Pol IV) complex. Interacts with NRPD1, NRPD2, NRPD3, NRPD3B, CLSY1 and CLSY2.</text>
</comment>
<comment type="subcellular location">
    <subcellularLocation>
        <location evidence="7">Nucleus</location>
    </subcellularLocation>
</comment>
<comment type="alternative products">
    <event type="alternative splicing"/>
    <isoform>
        <id>Q9XI47-1</id>
        <name>1</name>
        <sequence type="displayed"/>
    </isoform>
    <isoform>
        <id>Q9XI47-2</id>
        <name>2</name>
        <sequence type="described" ref="VSP_047675"/>
    </isoform>
    <isoform>
        <id>Q9XI47-3</id>
        <name>3</name>
        <sequence type="described" ref="VSP_047674 VSP_047675"/>
    </isoform>
</comment>
<comment type="domain">
    <text evidence="3 4">The SAWADEE domain (138-244) binds to mono-, di-, or trimethylated H3K9 histone peptides, but this interaction is impaired if H3K4me2/3 methylation is present (PubMed:23636332, PubMed:23637343).</text>
</comment>
<comment type="disruption phenotype">
    <text evidence="1">Loss of DRM2 controlled DNA methylation, but no effect on CMT3 or MET1 controlled methylation.</text>
</comment>
<comment type="miscellaneous">
    <text evidence="8 9">Associates in vivo with Pol IV but not with Pol V (PubMed:23637343) and this interaction is not dependent on its H3K9me binding activity (PubMed:23636332). Glu-130 and Asp-141 interact with the H3K4 side chain while the H3K9me1/2/3 side chains insert into a hydrophobic aromatic cage formed by Tyr-140, Phe-162 and Phe-165 (PubMed:23636332).</text>
</comment>
<dbReference type="EMBL" id="AC007591">
    <property type="protein sequence ID" value="AAD39678.1"/>
    <property type="molecule type" value="Genomic_DNA"/>
</dbReference>
<dbReference type="EMBL" id="CP002684">
    <property type="protein sequence ID" value="AEE29286.1"/>
    <property type="molecule type" value="Genomic_DNA"/>
</dbReference>
<dbReference type="EMBL" id="CP002684">
    <property type="protein sequence ID" value="AEE29288.1"/>
    <property type="molecule type" value="Genomic_DNA"/>
</dbReference>
<dbReference type="EMBL" id="AK117440">
    <property type="protein sequence ID" value="BAC42105.1"/>
    <property type="molecule type" value="mRNA"/>
</dbReference>
<dbReference type="EMBL" id="BT005197">
    <property type="protein sequence ID" value="AAO50730.1"/>
    <property type="molecule type" value="mRNA"/>
</dbReference>
<dbReference type="PIR" id="C86286">
    <property type="entry name" value="C86286"/>
</dbReference>
<dbReference type="RefSeq" id="NP_001031048.1">
    <molecule id="Q9XI47-2"/>
    <property type="nucleotide sequence ID" value="NM_001035971.2"/>
</dbReference>
<dbReference type="RefSeq" id="NP_849666.2">
    <molecule id="Q9XI47-1"/>
    <property type="nucleotide sequence ID" value="NM_179335.3"/>
</dbReference>
<dbReference type="PDB" id="4IUP">
    <property type="method" value="X-ray"/>
    <property type="resolution" value="1.90 A"/>
    <property type="chains" value="A/B=125-258"/>
</dbReference>
<dbReference type="PDB" id="4IUQ">
    <property type="method" value="X-ray"/>
    <property type="resolution" value="2.81 A"/>
    <property type="chains" value="A/B=125-258"/>
</dbReference>
<dbReference type="PDB" id="4IUR">
    <property type="method" value="X-ray"/>
    <property type="resolution" value="2.50 A"/>
    <property type="chains" value="A/B=125-258"/>
</dbReference>
<dbReference type="PDB" id="4IUT">
    <property type="method" value="X-ray"/>
    <property type="resolution" value="2.70 A"/>
    <property type="chains" value="A/B=125-258"/>
</dbReference>
<dbReference type="PDB" id="4IUU">
    <property type="method" value="X-ray"/>
    <property type="resolution" value="2.70 A"/>
    <property type="chains" value="A/B=125-258"/>
</dbReference>
<dbReference type="PDB" id="4IUV">
    <property type="method" value="X-ray"/>
    <property type="resolution" value="2.80 A"/>
    <property type="chains" value="A/B=125-258"/>
</dbReference>
<dbReference type="PDBsum" id="4IUP"/>
<dbReference type="PDBsum" id="4IUQ"/>
<dbReference type="PDBsum" id="4IUR"/>
<dbReference type="PDBsum" id="4IUT"/>
<dbReference type="PDBsum" id="4IUU"/>
<dbReference type="PDBsum" id="4IUV"/>
<dbReference type="SMR" id="Q9XI47"/>
<dbReference type="BioGRID" id="23328">
    <property type="interactions" value="8"/>
</dbReference>
<dbReference type="FunCoup" id="Q9XI47">
    <property type="interactions" value="848"/>
</dbReference>
<dbReference type="STRING" id="3702.Q9XI47"/>
<dbReference type="PaxDb" id="3702-AT1G15215.2"/>
<dbReference type="ProteomicsDB" id="234503">
    <molecule id="Q9XI47-1"/>
</dbReference>
<dbReference type="DNASU" id="838088"/>
<dbReference type="EnsemblPlants" id="AT1G15215.2">
    <molecule id="Q9XI47-1"/>
    <property type="protein sequence ID" value="AT1G15215.2"/>
    <property type="gene ID" value="AT1G15215"/>
</dbReference>
<dbReference type="EnsemblPlants" id="AT1G15215.3">
    <molecule id="Q9XI47-2"/>
    <property type="protein sequence ID" value="AT1G15215.3"/>
    <property type="gene ID" value="AT1G15215"/>
</dbReference>
<dbReference type="GeneID" id="838088"/>
<dbReference type="Gramene" id="AT1G15215.2">
    <molecule id="Q9XI47-1"/>
    <property type="protein sequence ID" value="AT1G15215.2"/>
    <property type="gene ID" value="AT1G15215"/>
</dbReference>
<dbReference type="Gramene" id="AT1G15215.3">
    <molecule id="Q9XI47-2"/>
    <property type="protein sequence ID" value="AT1G15215.3"/>
    <property type="gene ID" value="AT1G15215"/>
</dbReference>
<dbReference type="KEGG" id="ath:AT1G15215"/>
<dbReference type="Araport" id="AT1G15215"/>
<dbReference type="TAIR" id="AT1G15215">
    <property type="gene designation" value="SHH1"/>
</dbReference>
<dbReference type="eggNOG" id="ENOG502RI2U">
    <property type="taxonomic scope" value="Eukaryota"/>
</dbReference>
<dbReference type="HOGENOM" id="CLU_053618_0_0_1"/>
<dbReference type="InParanoid" id="Q9XI47"/>
<dbReference type="OMA" id="DPTECTC"/>
<dbReference type="PhylomeDB" id="Q9XI47"/>
<dbReference type="EvolutionaryTrace" id="Q9XI47"/>
<dbReference type="PRO" id="PR:Q9XI47"/>
<dbReference type="Proteomes" id="UP000006548">
    <property type="component" value="Chromosome 1"/>
</dbReference>
<dbReference type="ExpressionAtlas" id="Q9XI47">
    <property type="expression patterns" value="baseline and differential"/>
</dbReference>
<dbReference type="GO" id="GO:0005634">
    <property type="term" value="C:nucleus"/>
    <property type="evidence" value="ECO:0007669"/>
    <property type="project" value="UniProtKB-SubCell"/>
</dbReference>
<dbReference type="GO" id="GO:0003682">
    <property type="term" value="F:chromatin binding"/>
    <property type="evidence" value="ECO:0007669"/>
    <property type="project" value="InterPro"/>
</dbReference>
<dbReference type="GO" id="GO:0046872">
    <property type="term" value="F:metal ion binding"/>
    <property type="evidence" value="ECO:0007669"/>
    <property type="project" value="UniProtKB-KW"/>
</dbReference>
<dbReference type="GO" id="GO:0006346">
    <property type="term" value="P:DNA methylation-dependent constitutive heterochromatin formation"/>
    <property type="evidence" value="ECO:0000315"/>
    <property type="project" value="TAIR"/>
</dbReference>
<dbReference type="GO" id="GO:0031047">
    <property type="term" value="P:regulatory ncRNA-mediated gene silencing"/>
    <property type="evidence" value="ECO:0000315"/>
    <property type="project" value="TAIR"/>
</dbReference>
<dbReference type="Gene3D" id="2.30.30.140">
    <property type="match status" value="1"/>
</dbReference>
<dbReference type="Gene3D" id="2.40.50.40">
    <property type="match status" value="1"/>
</dbReference>
<dbReference type="InterPro" id="IPR032001">
    <property type="entry name" value="SAWADEE_dom"/>
</dbReference>
<dbReference type="InterPro" id="IPR039276">
    <property type="entry name" value="SHH1/2"/>
</dbReference>
<dbReference type="PANTHER" id="PTHR33827:SF2">
    <property type="entry name" value="PROTEIN SAWADEE HOMEODOMAIN HOMOLOG 1"/>
    <property type="match status" value="1"/>
</dbReference>
<dbReference type="PANTHER" id="PTHR33827">
    <property type="entry name" value="PROTEIN SAWADEE HOMEODOMAIN HOMOLOG 2"/>
    <property type="match status" value="1"/>
</dbReference>
<dbReference type="Pfam" id="PF16719">
    <property type="entry name" value="SAWADEE"/>
    <property type="match status" value="1"/>
</dbReference>
<protein>
    <recommendedName>
        <fullName>Protein SAWADEE HOMEODOMAIN HOMOLOG 1</fullName>
    </recommendedName>
    <alternativeName>
        <fullName>DNA-binding transcription factor 1</fullName>
    </alternativeName>
</protein>
<name>SHH1_ARATH</name>
<organism>
    <name type="scientific">Arabidopsis thaliana</name>
    <name type="common">Mouse-ear cress</name>
    <dbReference type="NCBI Taxonomy" id="3702"/>
    <lineage>
        <taxon>Eukaryota</taxon>
        <taxon>Viridiplantae</taxon>
        <taxon>Streptophyta</taxon>
        <taxon>Embryophyta</taxon>
        <taxon>Tracheophyta</taxon>
        <taxon>Spermatophyta</taxon>
        <taxon>Magnoliopsida</taxon>
        <taxon>eudicotyledons</taxon>
        <taxon>Gunneridae</taxon>
        <taxon>Pentapetalae</taxon>
        <taxon>rosids</taxon>
        <taxon>malvids</taxon>
        <taxon>Brassicales</taxon>
        <taxon>Brassicaceae</taxon>
        <taxon>Camelineae</taxon>
        <taxon>Arabidopsis</taxon>
    </lineage>
</organism>
<reference key="1">
    <citation type="journal article" date="2000" name="Nature">
        <title>Sequence and analysis of chromosome 1 of the plant Arabidopsis thaliana.</title>
        <authorList>
            <person name="Theologis A."/>
            <person name="Ecker J.R."/>
            <person name="Palm C.J."/>
            <person name="Federspiel N.A."/>
            <person name="Kaul S."/>
            <person name="White O."/>
            <person name="Alonso J."/>
            <person name="Altafi H."/>
            <person name="Araujo R."/>
            <person name="Bowman C.L."/>
            <person name="Brooks S.Y."/>
            <person name="Buehler E."/>
            <person name="Chan A."/>
            <person name="Chao Q."/>
            <person name="Chen H."/>
            <person name="Cheuk R.F."/>
            <person name="Chin C.W."/>
            <person name="Chung M.K."/>
            <person name="Conn L."/>
            <person name="Conway A.B."/>
            <person name="Conway A.R."/>
            <person name="Creasy T.H."/>
            <person name="Dewar K."/>
            <person name="Dunn P."/>
            <person name="Etgu P."/>
            <person name="Feldblyum T.V."/>
            <person name="Feng J.-D."/>
            <person name="Fong B."/>
            <person name="Fujii C.Y."/>
            <person name="Gill J.E."/>
            <person name="Goldsmith A.D."/>
            <person name="Haas B."/>
            <person name="Hansen N.F."/>
            <person name="Hughes B."/>
            <person name="Huizar L."/>
            <person name="Hunter J.L."/>
            <person name="Jenkins J."/>
            <person name="Johnson-Hopson C."/>
            <person name="Khan S."/>
            <person name="Khaykin E."/>
            <person name="Kim C.J."/>
            <person name="Koo H.L."/>
            <person name="Kremenetskaia I."/>
            <person name="Kurtz D.B."/>
            <person name="Kwan A."/>
            <person name="Lam B."/>
            <person name="Langin-Hooper S."/>
            <person name="Lee A."/>
            <person name="Lee J.M."/>
            <person name="Lenz C.A."/>
            <person name="Li J.H."/>
            <person name="Li Y.-P."/>
            <person name="Lin X."/>
            <person name="Liu S.X."/>
            <person name="Liu Z.A."/>
            <person name="Luros J.S."/>
            <person name="Maiti R."/>
            <person name="Marziali A."/>
            <person name="Militscher J."/>
            <person name="Miranda M."/>
            <person name="Nguyen M."/>
            <person name="Nierman W.C."/>
            <person name="Osborne B.I."/>
            <person name="Pai G."/>
            <person name="Peterson J."/>
            <person name="Pham P.K."/>
            <person name="Rizzo M."/>
            <person name="Rooney T."/>
            <person name="Rowley D."/>
            <person name="Sakano H."/>
            <person name="Salzberg S.L."/>
            <person name="Schwartz J.R."/>
            <person name="Shinn P."/>
            <person name="Southwick A.M."/>
            <person name="Sun H."/>
            <person name="Tallon L.J."/>
            <person name="Tambunga G."/>
            <person name="Toriumi M.J."/>
            <person name="Town C.D."/>
            <person name="Utterback T."/>
            <person name="Van Aken S."/>
            <person name="Vaysberg M."/>
            <person name="Vysotskaia V.S."/>
            <person name="Walker M."/>
            <person name="Wu D."/>
            <person name="Yu G."/>
            <person name="Fraser C.M."/>
            <person name="Venter J.C."/>
            <person name="Davis R.W."/>
        </authorList>
    </citation>
    <scope>NUCLEOTIDE SEQUENCE [LARGE SCALE GENOMIC DNA]</scope>
    <source>
        <strain>cv. Columbia</strain>
    </source>
</reference>
<reference key="2">
    <citation type="journal article" date="2017" name="Plant J.">
        <title>Araport11: a complete reannotation of the Arabidopsis thaliana reference genome.</title>
        <authorList>
            <person name="Cheng C.Y."/>
            <person name="Krishnakumar V."/>
            <person name="Chan A.P."/>
            <person name="Thibaud-Nissen F."/>
            <person name="Schobel S."/>
            <person name="Town C.D."/>
        </authorList>
    </citation>
    <scope>GENOME REANNOTATION</scope>
    <source>
        <strain>cv. Columbia</strain>
    </source>
</reference>
<reference key="3">
    <citation type="journal article" date="2002" name="Science">
        <title>Functional annotation of a full-length Arabidopsis cDNA collection.</title>
        <authorList>
            <person name="Seki M."/>
            <person name="Narusaka M."/>
            <person name="Kamiya A."/>
            <person name="Ishida J."/>
            <person name="Satou M."/>
            <person name="Sakurai T."/>
            <person name="Nakajima M."/>
            <person name="Enju A."/>
            <person name="Akiyama K."/>
            <person name="Oono Y."/>
            <person name="Muramatsu M."/>
            <person name="Hayashizaki Y."/>
            <person name="Kawai J."/>
            <person name="Carninci P."/>
            <person name="Itoh M."/>
            <person name="Ishii Y."/>
            <person name="Arakawa T."/>
            <person name="Shibata K."/>
            <person name="Shinagawa A."/>
            <person name="Shinozaki K."/>
        </authorList>
    </citation>
    <scope>NUCLEOTIDE SEQUENCE [LARGE SCALE MRNA] (ISOFORM 3)</scope>
    <source>
        <strain>cv. Columbia</strain>
    </source>
</reference>
<reference key="4">
    <citation type="journal article" date="2003" name="Science">
        <title>Empirical analysis of transcriptional activity in the Arabidopsis genome.</title>
        <authorList>
            <person name="Yamada K."/>
            <person name="Lim J."/>
            <person name="Dale J.M."/>
            <person name="Chen H."/>
            <person name="Shinn P."/>
            <person name="Palm C.J."/>
            <person name="Southwick A.M."/>
            <person name="Wu H.C."/>
            <person name="Kim C.J."/>
            <person name="Nguyen M."/>
            <person name="Pham P.K."/>
            <person name="Cheuk R.F."/>
            <person name="Karlin-Newmann G."/>
            <person name="Liu S.X."/>
            <person name="Lam B."/>
            <person name="Sakano H."/>
            <person name="Wu T."/>
            <person name="Yu G."/>
            <person name="Miranda M."/>
            <person name="Quach H.L."/>
            <person name="Tripp M."/>
            <person name="Chang C.H."/>
            <person name="Lee J.M."/>
            <person name="Toriumi M.J."/>
            <person name="Chan M.M."/>
            <person name="Tang C.C."/>
            <person name="Onodera C.S."/>
            <person name="Deng J.M."/>
            <person name="Akiyama K."/>
            <person name="Ansari Y."/>
            <person name="Arakawa T."/>
            <person name="Banh J."/>
            <person name="Banno F."/>
            <person name="Bowser L."/>
            <person name="Brooks S.Y."/>
            <person name="Carninci P."/>
            <person name="Chao Q."/>
            <person name="Choy N."/>
            <person name="Enju A."/>
            <person name="Goldsmith A.D."/>
            <person name="Gurjal M."/>
            <person name="Hansen N.F."/>
            <person name="Hayashizaki Y."/>
            <person name="Johnson-Hopson C."/>
            <person name="Hsuan V.W."/>
            <person name="Iida K."/>
            <person name="Karnes M."/>
            <person name="Khan S."/>
            <person name="Koesema E."/>
            <person name="Ishida J."/>
            <person name="Jiang P.X."/>
            <person name="Jones T."/>
            <person name="Kawai J."/>
            <person name="Kamiya A."/>
            <person name="Meyers C."/>
            <person name="Nakajima M."/>
            <person name="Narusaka M."/>
            <person name="Seki M."/>
            <person name="Sakurai T."/>
            <person name="Satou M."/>
            <person name="Tamse R."/>
            <person name="Vaysberg M."/>
            <person name="Wallender E.K."/>
            <person name="Wong C."/>
            <person name="Yamamura Y."/>
            <person name="Yuan S."/>
            <person name="Shinozaki K."/>
            <person name="Davis R.W."/>
            <person name="Theologis A."/>
            <person name="Ecker J.R."/>
        </authorList>
    </citation>
    <scope>NUCLEOTIDE SEQUENCE [LARGE SCALE MRNA] (ISOFORM 3)</scope>
    <source>
        <strain>cv. Columbia</strain>
    </source>
</reference>
<reference key="5">
    <citation type="journal article" date="2011" name="Cell Res.">
        <title>An atypical component of RNA-directed DNA methylation machinery has both DNA methylation-dependent and -independent roles in locus-specific transcriptional gene silencing.</title>
        <authorList>
            <person name="Liu J."/>
            <person name="Bai G."/>
            <person name="Zhang C."/>
            <person name="Chen W."/>
            <person name="Zhou J."/>
            <person name="Zhang S."/>
            <person name="Chen Q."/>
            <person name="Deng X."/>
            <person name="He X.J."/>
            <person name="Zhu J.K."/>
        </authorList>
    </citation>
    <scope>FUNCTION</scope>
</reference>
<reference key="6">
    <citation type="journal article" date="2011" name="PLoS Genet.">
        <title>SHH1, a homeodomain protein required for DNA methylation, as well as RDR2, RDM4, and chromatin remodeling factors, associate with RNA polymerase IV.</title>
        <authorList>
            <person name="Law J.A."/>
            <person name="Vashisht A.A."/>
            <person name="Wohlschlegel J.A."/>
            <person name="Jacobsen S.E."/>
        </authorList>
    </citation>
    <scope>IDENTIFICATION BY MASS SPECTROMETRY</scope>
    <scope>FUNCTION</scope>
    <scope>INTERACTION WITH NRPD1</scope>
    <scope>DISRUPTION PHENOTYPE</scope>
</reference>
<reference key="7">
    <citation type="journal article" date="2013" name="Proc. Natl. Acad. Sci. U.S.A.">
        <title>DTF1 is a core component of RNA-directed DNA methylation and may assist in the recruitment of Pol IV.</title>
        <authorList>
            <person name="Zhang H."/>
            <person name="Ma Z.Y."/>
            <person name="Zeng L."/>
            <person name="Tanaka K."/>
            <person name="Zhang C.J."/>
            <person name="Ma J."/>
            <person name="Bai G."/>
            <person name="Wang P."/>
            <person name="Zhang S.W."/>
            <person name="Liu Z.W."/>
            <person name="Cai T."/>
            <person name="Tang K."/>
            <person name="Liu R."/>
            <person name="Shi X."/>
            <person name="He X.J."/>
            <person name="Zhu J.K."/>
        </authorList>
    </citation>
    <scope>FUNCTION</scope>
    <scope>INTERACTION WITH CLSY1; CLSY2 AND POL IV COMPLEX</scope>
    <scope>DOMAIN</scope>
    <scope>MUTAGENESIS OF TYR-140; PHE-162 AND PHE-165</scope>
</reference>
<reference key="8">
    <citation type="journal article" date="2013" name="Nature">
        <title>Polymerase IV occupancy at RNA-directed DNA methylation sites requires SHH1.</title>
        <authorList>
            <person name="Law J.A."/>
            <person name="Du J."/>
            <person name="Hale C.J."/>
            <person name="Feng S."/>
            <person name="Krajewski K."/>
            <person name="Palanca A.M."/>
            <person name="Strahl B.D."/>
            <person name="Patel D.J."/>
            <person name="Jacobsen S.E."/>
        </authorList>
    </citation>
    <scope>X-RAY CRYSTALLOGRAPHY (1.9 ANGSTROMS) OF 125-258 IN COMPLEX WITH HISTONE H3 PEPTIDE</scope>
    <scope>FUNCTION</scope>
    <scope>DOMAIN</scope>
    <scope>MUTAGENESIS OF GLU-130; TYR-140; ASP-141; PHE-162; PHE-165; CYS-191; TYR-212; HIS-225 AND CYS-232</scope>
</reference>
<gene>
    <name type="primary">SHH1</name>
    <name type="synonym">DTF1</name>
    <name type="ordered locus">At1g15215</name>
    <name type="ORF">F9L1.16</name>
</gene>